<gene>
    <name evidence="1" type="primary">trhO</name>
    <name type="ordered locus">BUAPTUC7_359</name>
</gene>
<reference key="1">
    <citation type="journal article" date="2009" name="Science">
        <title>The dynamics and time scale of ongoing genomic erosion in symbiotic bacteria.</title>
        <authorList>
            <person name="Moran N.A."/>
            <person name="McLaughlin H.J."/>
            <person name="Sorek R."/>
        </authorList>
    </citation>
    <scope>NUCLEOTIDE SEQUENCE [LARGE SCALE GENOMIC DNA]</scope>
    <source>
        <strain>Tuc7</strain>
    </source>
</reference>
<keyword id="KW-0560">Oxidoreductase</keyword>
<keyword id="KW-0819">tRNA processing</keyword>
<proteinExistence type="inferred from homology"/>
<organism>
    <name type="scientific">Buchnera aphidicola subsp. Acyrthosiphon pisum (strain Tuc7)</name>
    <dbReference type="NCBI Taxonomy" id="561501"/>
    <lineage>
        <taxon>Bacteria</taxon>
        <taxon>Pseudomonadati</taxon>
        <taxon>Pseudomonadota</taxon>
        <taxon>Gammaproteobacteria</taxon>
        <taxon>Enterobacterales</taxon>
        <taxon>Erwiniaceae</taxon>
        <taxon>Buchnera</taxon>
    </lineage>
</organism>
<comment type="function">
    <text evidence="1">Catalyzes oxygen-dependent 5-hydroxyuridine (ho5U) modification at position 34 in tRNAs.</text>
</comment>
<comment type="catalytic activity">
    <reaction evidence="1">
        <text>uridine(34) in tRNA + AH2 + O2 = 5-hydroxyuridine(34) in tRNA + A + H2O</text>
        <dbReference type="Rhea" id="RHEA:64224"/>
        <dbReference type="Rhea" id="RHEA-COMP:11727"/>
        <dbReference type="Rhea" id="RHEA-COMP:13381"/>
        <dbReference type="ChEBI" id="CHEBI:13193"/>
        <dbReference type="ChEBI" id="CHEBI:15377"/>
        <dbReference type="ChEBI" id="CHEBI:15379"/>
        <dbReference type="ChEBI" id="CHEBI:17499"/>
        <dbReference type="ChEBI" id="CHEBI:65315"/>
        <dbReference type="ChEBI" id="CHEBI:136877"/>
    </reaction>
</comment>
<comment type="similarity">
    <text evidence="1">Belongs to the TrhO family.</text>
</comment>
<evidence type="ECO:0000255" key="1">
    <source>
        <dbReference type="HAMAP-Rule" id="MF_00469"/>
    </source>
</evidence>
<dbReference type="EC" id="1.14.-.-" evidence="1"/>
<dbReference type="EMBL" id="CP001158">
    <property type="protein sequence ID" value="ACL30167.1"/>
    <property type="molecule type" value="Genomic_DNA"/>
</dbReference>
<dbReference type="RefSeq" id="WP_009874322.1">
    <property type="nucleotide sequence ID" value="NC_011834.1"/>
</dbReference>
<dbReference type="SMR" id="B8D7Q2"/>
<dbReference type="KEGG" id="bau:BUAPTUC7_359"/>
<dbReference type="HOGENOM" id="CLU_038878_1_1_6"/>
<dbReference type="GO" id="GO:0016705">
    <property type="term" value="F:oxidoreductase activity, acting on paired donors, with incorporation or reduction of molecular oxygen"/>
    <property type="evidence" value="ECO:0007669"/>
    <property type="project" value="UniProtKB-UniRule"/>
</dbReference>
<dbReference type="GO" id="GO:0006400">
    <property type="term" value="P:tRNA modification"/>
    <property type="evidence" value="ECO:0007669"/>
    <property type="project" value="UniProtKB-UniRule"/>
</dbReference>
<dbReference type="CDD" id="cd01518">
    <property type="entry name" value="RHOD_YceA"/>
    <property type="match status" value="1"/>
</dbReference>
<dbReference type="Gene3D" id="3.30.70.100">
    <property type="match status" value="1"/>
</dbReference>
<dbReference type="Gene3D" id="3.40.250.10">
    <property type="entry name" value="Rhodanese-like domain"/>
    <property type="match status" value="1"/>
</dbReference>
<dbReference type="HAMAP" id="MF_00469">
    <property type="entry name" value="TrhO"/>
    <property type="match status" value="1"/>
</dbReference>
<dbReference type="InterPro" id="IPR001763">
    <property type="entry name" value="Rhodanese-like_dom"/>
</dbReference>
<dbReference type="InterPro" id="IPR036873">
    <property type="entry name" value="Rhodanese-like_dom_sf"/>
</dbReference>
<dbReference type="InterPro" id="IPR022111">
    <property type="entry name" value="Rhodanese_C"/>
</dbReference>
<dbReference type="InterPro" id="IPR020936">
    <property type="entry name" value="TrhO"/>
</dbReference>
<dbReference type="InterPro" id="IPR040503">
    <property type="entry name" value="TRHO_N"/>
</dbReference>
<dbReference type="NCBIfam" id="NF001133">
    <property type="entry name" value="PRK00142.1-1"/>
    <property type="match status" value="1"/>
</dbReference>
<dbReference type="PANTHER" id="PTHR43846:SF1">
    <property type="entry name" value="TRNA URIDINE(34) HYDROXYLASE"/>
    <property type="match status" value="1"/>
</dbReference>
<dbReference type="PANTHER" id="PTHR43846">
    <property type="entry name" value="UPF0176 PROTEIN YCEA"/>
    <property type="match status" value="1"/>
</dbReference>
<dbReference type="Pfam" id="PF00581">
    <property type="entry name" value="Rhodanese"/>
    <property type="match status" value="1"/>
</dbReference>
<dbReference type="Pfam" id="PF12368">
    <property type="entry name" value="Rhodanese_C"/>
    <property type="match status" value="1"/>
</dbReference>
<dbReference type="Pfam" id="PF17773">
    <property type="entry name" value="UPF0176_N"/>
    <property type="match status" value="1"/>
</dbReference>
<dbReference type="SMART" id="SM00450">
    <property type="entry name" value="RHOD"/>
    <property type="match status" value="1"/>
</dbReference>
<dbReference type="SUPFAM" id="SSF52821">
    <property type="entry name" value="Rhodanese/Cell cycle control phosphatase"/>
    <property type="match status" value="1"/>
</dbReference>
<dbReference type="PROSITE" id="PS50206">
    <property type="entry name" value="RHODANESE_3"/>
    <property type="match status" value="1"/>
</dbReference>
<name>TRHO_BUCAT</name>
<sequence length="324" mass="38404">MSILHNIVSKKELKRRMFFETEPRLTLSFYKYFFIKNTQEYRDRLYKNFYKYNVLGRIYVASEGINAQISVPKKYYSILKKFLYNFDIELNNLRINKSLDNEKSFWVLCVKIKKKIVQDGIKEHFFNPNNVGIYIQSEQVNSMLNDKKTIFIDMRNSYEYAIGHFENAIEIKSITFREQLKKVIQLMAYAKNKKIVMYCTGGIRCEKATSWMLFNGFKHVYHLEGGIIGYVHDARKNGLPVLFKGKSFVFDNRMSEKISDEVISYCKQCGKSSDVYINCKYSSCHLLFIQCENCSVKFHSCCSLECMKKYNFYMLNNDLKKISY</sequence>
<accession>B8D7Q2</accession>
<protein>
    <recommendedName>
        <fullName evidence="1">tRNA uridine(34) hydroxylase</fullName>
        <ecNumber evidence="1">1.14.-.-</ecNumber>
    </recommendedName>
    <alternativeName>
        <fullName evidence="1">tRNA hydroxylation protein O</fullName>
    </alternativeName>
</protein>
<feature type="chain" id="PRO_1000135465" description="tRNA uridine(34) hydroxylase">
    <location>
        <begin position="1"/>
        <end position="324"/>
    </location>
</feature>
<feature type="domain" description="Rhodanese" evidence="1">
    <location>
        <begin position="145"/>
        <end position="239"/>
    </location>
</feature>
<feature type="active site" description="Cysteine persulfide intermediate" evidence="1">
    <location>
        <position position="199"/>
    </location>
</feature>